<accession>B0BTL8</accession>
<evidence type="ECO:0000255" key="1">
    <source>
        <dbReference type="HAMAP-Rule" id="MF_00391"/>
    </source>
</evidence>
<evidence type="ECO:0000256" key="2">
    <source>
        <dbReference type="SAM" id="MobiDB-lite"/>
    </source>
</evidence>
<evidence type="ECO:0000305" key="3"/>
<reference key="1">
    <citation type="journal article" date="2008" name="PLoS ONE">
        <title>Genome biology of Actinobacillus pleuropneumoniae JL03, an isolate of serotype 3 prevalent in China.</title>
        <authorList>
            <person name="Xu Z."/>
            <person name="Zhou Y."/>
            <person name="Li L."/>
            <person name="Zhou R."/>
            <person name="Xiao S."/>
            <person name="Wan Y."/>
            <person name="Zhang S."/>
            <person name="Wang K."/>
            <person name="Li W."/>
            <person name="Li L."/>
            <person name="Jin H."/>
            <person name="Kang M."/>
            <person name="Dalai B."/>
            <person name="Li T."/>
            <person name="Liu L."/>
            <person name="Cheng Y."/>
            <person name="Zhang L."/>
            <person name="Xu T."/>
            <person name="Zheng H."/>
            <person name="Pu S."/>
            <person name="Wang B."/>
            <person name="Gu W."/>
            <person name="Zhang X.L."/>
            <person name="Zhu G.-F."/>
            <person name="Wang S."/>
            <person name="Zhao G.-P."/>
            <person name="Chen H."/>
        </authorList>
    </citation>
    <scope>NUCLEOTIDE SEQUENCE [LARGE SCALE GENOMIC DNA]</scope>
    <source>
        <strain>JL03</strain>
    </source>
</reference>
<gene>
    <name evidence="1" type="primary">rpmH</name>
    <name type="ordered locus">APJL_1984</name>
</gene>
<proteinExistence type="inferred from homology"/>
<sequence length="44" mass="5082">MKRTFQPSVLKRARTHGFRARMATKNGRQVLARRRAKGRKSLSA</sequence>
<keyword id="KW-0687">Ribonucleoprotein</keyword>
<keyword id="KW-0689">Ribosomal protein</keyword>
<feature type="chain" id="PRO_1000122888" description="Large ribosomal subunit protein bL34">
    <location>
        <begin position="1"/>
        <end position="44"/>
    </location>
</feature>
<feature type="region of interest" description="Disordered" evidence="2">
    <location>
        <begin position="23"/>
        <end position="44"/>
    </location>
</feature>
<feature type="compositionally biased region" description="Basic residues" evidence="2">
    <location>
        <begin position="31"/>
        <end position="44"/>
    </location>
</feature>
<dbReference type="EMBL" id="CP000687">
    <property type="protein sequence ID" value="ABY70532.1"/>
    <property type="molecule type" value="Genomic_DNA"/>
</dbReference>
<dbReference type="RefSeq" id="WP_005599701.1">
    <property type="nucleotide sequence ID" value="NC_010278.1"/>
</dbReference>
<dbReference type="SMR" id="B0BTL8"/>
<dbReference type="GeneID" id="92743426"/>
<dbReference type="KEGG" id="apj:APJL_1984"/>
<dbReference type="HOGENOM" id="CLU_129938_2_0_6"/>
<dbReference type="Proteomes" id="UP000008547">
    <property type="component" value="Chromosome"/>
</dbReference>
<dbReference type="GO" id="GO:1990904">
    <property type="term" value="C:ribonucleoprotein complex"/>
    <property type="evidence" value="ECO:0007669"/>
    <property type="project" value="UniProtKB-KW"/>
</dbReference>
<dbReference type="GO" id="GO:0005840">
    <property type="term" value="C:ribosome"/>
    <property type="evidence" value="ECO:0007669"/>
    <property type="project" value="UniProtKB-KW"/>
</dbReference>
<dbReference type="GO" id="GO:0003735">
    <property type="term" value="F:structural constituent of ribosome"/>
    <property type="evidence" value="ECO:0007669"/>
    <property type="project" value="InterPro"/>
</dbReference>
<dbReference type="GO" id="GO:0006412">
    <property type="term" value="P:translation"/>
    <property type="evidence" value="ECO:0007669"/>
    <property type="project" value="UniProtKB-UniRule"/>
</dbReference>
<dbReference type="FunFam" id="1.10.287.3980:FF:000001">
    <property type="entry name" value="Mitochondrial ribosomal protein L34"/>
    <property type="match status" value="1"/>
</dbReference>
<dbReference type="Gene3D" id="1.10.287.3980">
    <property type="match status" value="1"/>
</dbReference>
<dbReference type="HAMAP" id="MF_00391">
    <property type="entry name" value="Ribosomal_bL34"/>
    <property type="match status" value="1"/>
</dbReference>
<dbReference type="InterPro" id="IPR000271">
    <property type="entry name" value="Ribosomal_bL34"/>
</dbReference>
<dbReference type="InterPro" id="IPR020939">
    <property type="entry name" value="Ribosomal_bL34_CS"/>
</dbReference>
<dbReference type="NCBIfam" id="TIGR01030">
    <property type="entry name" value="rpmH_bact"/>
    <property type="match status" value="1"/>
</dbReference>
<dbReference type="PANTHER" id="PTHR14503:SF4">
    <property type="entry name" value="LARGE RIBOSOMAL SUBUNIT PROTEIN BL34M"/>
    <property type="match status" value="1"/>
</dbReference>
<dbReference type="PANTHER" id="PTHR14503">
    <property type="entry name" value="MITOCHONDRIAL RIBOSOMAL PROTEIN 34 FAMILY MEMBER"/>
    <property type="match status" value="1"/>
</dbReference>
<dbReference type="Pfam" id="PF00468">
    <property type="entry name" value="Ribosomal_L34"/>
    <property type="match status" value="1"/>
</dbReference>
<dbReference type="PROSITE" id="PS00784">
    <property type="entry name" value="RIBOSOMAL_L34"/>
    <property type="match status" value="1"/>
</dbReference>
<name>RL34_ACTPJ</name>
<comment type="similarity">
    <text evidence="1">Belongs to the bacterial ribosomal protein bL34 family.</text>
</comment>
<protein>
    <recommendedName>
        <fullName evidence="1">Large ribosomal subunit protein bL34</fullName>
    </recommendedName>
    <alternativeName>
        <fullName evidence="3">50S ribosomal protein L34</fullName>
    </alternativeName>
</protein>
<organism>
    <name type="scientific">Actinobacillus pleuropneumoniae serotype 3 (strain JL03)</name>
    <dbReference type="NCBI Taxonomy" id="434271"/>
    <lineage>
        <taxon>Bacteria</taxon>
        <taxon>Pseudomonadati</taxon>
        <taxon>Pseudomonadota</taxon>
        <taxon>Gammaproteobacteria</taxon>
        <taxon>Pasteurellales</taxon>
        <taxon>Pasteurellaceae</taxon>
        <taxon>Actinobacillus</taxon>
    </lineage>
</organism>